<accession>P26780</accession>
<sequence>MAMAKKSVSSFTLIFILVLVIFEVPEIKAQDSECLKEYGGDVGFPFCAPRIFPTICYTRCRENKGAKGGRCIWGEGTNVKCLCDYCNDSPFDQILRGGI</sequence>
<protein>
    <recommendedName>
        <fullName>Defensin-like protein 2</fullName>
    </recommendedName>
    <alternativeName>
        <fullName>MTI-2</fullName>
    </alternativeName>
    <alternativeName>
        <fullName>Trypsin inhibitor 2</fullName>
    </alternativeName>
</protein>
<keyword id="KW-0929">Antimicrobial</keyword>
<keyword id="KW-0903">Direct protein sequencing</keyword>
<keyword id="KW-1015">Disulfide bond</keyword>
<keyword id="KW-0295">Fungicide</keyword>
<keyword id="KW-0964">Secreted</keyword>
<keyword id="KW-0732">Signal</keyword>
<reference key="1">
    <citation type="journal article" date="1995" name="FEBS Lett.">
        <title>The gene coding for the mustard trypsin inhibitor-2 is discontinuous and wound-inducible.</title>
        <authorList>
            <person name="Ceci L.R."/>
            <person name="Spoto N."/>
            <person name="de Virgilio M."/>
            <person name="Gallerani R."/>
        </authorList>
    </citation>
    <scope>NUCLEOTIDE SEQUENCE [GENOMIC DNA]</scope>
    <source>
        <strain>cv. Albatros</strain>
        <tissue>Seed</tissue>
    </source>
</reference>
<reference key="2">
    <citation type="journal article" date="1992" name="FEBS Lett.">
        <title>Purification, inhibitory properties and amino acid sequence of a new serine proteinase inhibitor from white mustard (Sinapis alba L.) seed.</title>
        <authorList>
            <person name="Menegatti E."/>
            <person name="Tedeschi G."/>
            <person name="Ronchi S."/>
            <person name="Bortolotti F."/>
            <person name="Ascenzi P."/>
            <person name="Thomas R.M."/>
            <person name="Bolognesi M."/>
            <person name="Palmieri S."/>
        </authorList>
    </citation>
    <scope>PROTEIN SEQUENCE OF 31-93</scope>
    <source>
        <strain>cv. Albatros</strain>
        <tissue>Seed</tissue>
    </source>
</reference>
<name>DEF2_SINAL</name>
<feature type="signal peptide" evidence="2">
    <location>
        <begin position="1"/>
        <end position="30"/>
    </location>
</feature>
<feature type="chain" id="PRO_0000031097" description="Defensin-like protein 2">
    <location>
        <begin position="31"/>
        <end position="93"/>
    </location>
</feature>
<feature type="propeptide" id="PRO_0000031098">
    <location>
        <begin position="94"/>
        <end position="99"/>
    </location>
</feature>
<feature type="site" description="Reactive bond" evidence="1">
    <location>
        <begin position="50"/>
        <end position="51"/>
    </location>
</feature>
<feature type="disulfide bond" evidence="1">
    <location>
        <begin position="34"/>
        <end position="86"/>
    </location>
</feature>
<feature type="disulfide bond" evidence="1">
    <location>
        <begin position="47"/>
        <end position="71"/>
    </location>
</feature>
<feature type="disulfide bond" evidence="1">
    <location>
        <begin position="56"/>
        <end position="81"/>
    </location>
</feature>
<feature type="disulfide bond" evidence="1">
    <location>
        <begin position="60"/>
        <end position="83"/>
    </location>
</feature>
<organism>
    <name type="scientific">Sinapis alba</name>
    <name type="common">White mustard</name>
    <name type="synonym">Brassica hirta</name>
    <dbReference type="NCBI Taxonomy" id="3728"/>
    <lineage>
        <taxon>Eukaryota</taxon>
        <taxon>Viridiplantae</taxon>
        <taxon>Streptophyta</taxon>
        <taxon>Embryophyta</taxon>
        <taxon>Tracheophyta</taxon>
        <taxon>Spermatophyta</taxon>
        <taxon>Magnoliopsida</taxon>
        <taxon>eudicotyledons</taxon>
        <taxon>Gunneridae</taxon>
        <taxon>Pentapetalae</taxon>
        <taxon>rosids</taxon>
        <taxon>malvids</taxon>
        <taxon>Brassicales</taxon>
        <taxon>Brassicaceae</taxon>
        <taxon>Brassiceae</taxon>
        <taxon>Sinapis</taxon>
    </lineage>
</organism>
<proteinExistence type="evidence at protein level"/>
<comment type="function">
    <text>Inhibits bovine beta-trypsin and alpha-chymotrypsin on a 1:1 molar basis.</text>
</comment>
<comment type="subcellular location">
    <subcellularLocation>
        <location>Secreted</location>
    </subcellularLocation>
</comment>
<comment type="similarity">
    <text evidence="3">Belongs to the DEFL family. Protease inhibitor I18 (RTI/MTI-2) subfamily.</text>
</comment>
<comment type="caution">
    <text evidence="3">Was initially thought (PubMed:7750566, PubMed:1451776) to be a protease inhibitor.</text>
</comment>
<evidence type="ECO:0000250" key="1"/>
<evidence type="ECO:0000269" key="2">
    <source>
    </source>
</evidence>
<evidence type="ECO:0000305" key="3"/>
<dbReference type="EMBL" id="X84208">
    <property type="protein sequence ID" value="CAA58994.1"/>
    <property type="molecule type" value="Genomic_DNA"/>
</dbReference>
<dbReference type="PIR" id="S65661">
    <property type="entry name" value="S65661"/>
</dbReference>
<dbReference type="SMR" id="P26780"/>
<dbReference type="MEROPS" id="I18.001"/>
<dbReference type="GO" id="GO:0005576">
    <property type="term" value="C:extracellular region"/>
    <property type="evidence" value="ECO:0007669"/>
    <property type="project" value="UniProtKB-SubCell"/>
</dbReference>
<dbReference type="GO" id="GO:0019871">
    <property type="term" value="F:sodium channel inhibitor activity"/>
    <property type="evidence" value="ECO:0007669"/>
    <property type="project" value="InterPro"/>
</dbReference>
<dbReference type="GO" id="GO:0050832">
    <property type="term" value="P:defense response to fungus"/>
    <property type="evidence" value="ECO:0007669"/>
    <property type="project" value="UniProtKB-KW"/>
</dbReference>
<dbReference type="GO" id="GO:0031640">
    <property type="term" value="P:killing of cells of another organism"/>
    <property type="evidence" value="ECO:0007669"/>
    <property type="project" value="UniProtKB-KW"/>
</dbReference>
<dbReference type="Gene3D" id="3.30.30.10">
    <property type="entry name" value="Knottin, scorpion toxin-like"/>
    <property type="match status" value="1"/>
</dbReference>
<dbReference type="InterPro" id="IPR003614">
    <property type="entry name" value="Scorpion_toxin-like"/>
</dbReference>
<dbReference type="InterPro" id="IPR036574">
    <property type="entry name" value="Scorpion_toxin-like_sf"/>
</dbReference>
<dbReference type="InterPro" id="IPR002061">
    <property type="entry name" value="Scorpion_toxinL/defensin"/>
</dbReference>
<dbReference type="Pfam" id="PF00537">
    <property type="entry name" value="Toxin_3"/>
    <property type="match status" value="1"/>
</dbReference>
<dbReference type="SMART" id="SM00505">
    <property type="entry name" value="Knot1"/>
    <property type="match status" value="1"/>
</dbReference>
<dbReference type="SUPFAM" id="SSF57095">
    <property type="entry name" value="Scorpion toxin-like"/>
    <property type="match status" value="1"/>
</dbReference>